<accession>Q81I72</accession>
<gene>
    <name evidence="1" type="primary">queG</name>
    <name type="ordered locus">BC_0544</name>
</gene>
<organism>
    <name type="scientific">Bacillus cereus (strain ATCC 14579 / DSM 31 / CCUG 7414 / JCM 2152 / NBRC 15305 / NCIMB 9373 / NCTC 2599 / NRRL B-3711)</name>
    <dbReference type="NCBI Taxonomy" id="226900"/>
    <lineage>
        <taxon>Bacteria</taxon>
        <taxon>Bacillati</taxon>
        <taxon>Bacillota</taxon>
        <taxon>Bacilli</taxon>
        <taxon>Bacillales</taxon>
        <taxon>Bacillaceae</taxon>
        <taxon>Bacillus</taxon>
        <taxon>Bacillus cereus group</taxon>
    </lineage>
</organism>
<feature type="chain" id="PRO_0000416065" description="Epoxyqueuosine reductase">
    <location>
        <begin position="1"/>
        <end position="380"/>
    </location>
</feature>
<feature type="domain" description="4Fe-4S ferredoxin-type 1" evidence="1">
    <location>
        <begin position="178"/>
        <end position="208"/>
    </location>
</feature>
<feature type="domain" description="4Fe-4S ferredoxin-type 2" evidence="1">
    <location>
        <begin position="226"/>
        <end position="258"/>
    </location>
</feature>
<feature type="active site" description="Proton donor" evidence="1">
    <location>
        <position position="134"/>
    </location>
</feature>
<feature type="binding site" evidence="1">
    <location>
        <position position="188"/>
    </location>
    <ligand>
        <name>[4Fe-4S] cluster</name>
        <dbReference type="ChEBI" id="CHEBI:49883"/>
        <label>1</label>
    </ligand>
</feature>
<feature type="binding site" evidence="1">
    <location>
        <position position="191"/>
    </location>
    <ligand>
        <name>[4Fe-4S] cluster</name>
        <dbReference type="ChEBI" id="CHEBI:49883"/>
        <label>1</label>
    </ligand>
</feature>
<feature type="binding site" evidence="1">
    <location>
        <position position="194"/>
    </location>
    <ligand>
        <name>[4Fe-4S] cluster</name>
        <dbReference type="ChEBI" id="CHEBI:49883"/>
        <label>1</label>
    </ligand>
</feature>
<feature type="binding site" evidence="1">
    <location>
        <position position="198"/>
    </location>
    <ligand>
        <name>[4Fe-4S] cluster</name>
        <dbReference type="ChEBI" id="CHEBI:49883"/>
        <label>2</label>
    </ligand>
</feature>
<feature type="binding site" evidence="1">
    <location>
        <position position="214"/>
    </location>
    <ligand>
        <name>[4Fe-4S] cluster</name>
        <dbReference type="ChEBI" id="CHEBI:49883"/>
        <label>2</label>
    </ligand>
</feature>
<feature type="binding site" evidence="1">
    <location>
        <position position="240"/>
    </location>
    <ligand>
        <name>[4Fe-4S] cluster</name>
        <dbReference type="ChEBI" id="CHEBI:49883"/>
        <label>2</label>
    </ligand>
</feature>
<feature type="binding site" evidence="1">
    <location>
        <position position="243"/>
    </location>
    <ligand>
        <name>[4Fe-4S] cluster</name>
        <dbReference type="ChEBI" id="CHEBI:49883"/>
        <label>2</label>
    </ligand>
</feature>
<feature type="binding site" evidence="1">
    <location>
        <position position="247"/>
    </location>
    <ligand>
        <name>[4Fe-4S] cluster</name>
        <dbReference type="ChEBI" id="CHEBI:49883"/>
        <label>1</label>
    </ligand>
</feature>
<reference key="1">
    <citation type="journal article" date="2003" name="Nature">
        <title>Genome sequence of Bacillus cereus and comparative analysis with Bacillus anthracis.</title>
        <authorList>
            <person name="Ivanova N."/>
            <person name="Sorokin A."/>
            <person name="Anderson I."/>
            <person name="Galleron N."/>
            <person name="Candelon B."/>
            <person name="Kapatral V."/>
            <person name="Bhattacharyya A."/>
            <person name="Reznik G."/>
            <person name="Mikhailova N."/>
            <person name="Lapidus A."/>
            <person name="Chu L."/>
            <person name="Mazur M."/>
            <person name="Goltsman E."/>
            <person name="Larsen N."/>
            <person name="D'Souza M."/>
            <person name="Walunas T."/>
            <person name="Grechkin Y."/>
            <person name="Pusch G."/>
            <person name="Haselkorn R."/>
            <person name="Fonstein M."/>
            <person name="Ehrlich S.D."/>
            <person name="Overbeek R."/>
            <person name="Kyrpides N.C."/>
        </authorList>
    </citation>
    <scope>NUCLEOTIDE SEQUENCE [LARGE SCALE GENOMIC DNA]</scope>
    <source>
        <strain>ATCC 14579 / DSM 31 / CCUG 7414 / JCM 2152 / NBRC 15305 / NCIMB 9373 / NCTC 2599 / NRRL B-3711</strain>
    </source>
</reference>
<dbReference type="EC" id="1.17.99.6" evidence="1"/>
<dbReference type="EMBL" id="AE016877">
    <property type="protein sequence ID" value="AAP07564.1"/>
    <property type="molecule type" value="Genomic_DNA"/>
</dbReference>
<dbReference type="RefSeq" id="NP_830363.1">
    <property type="nucleotide sequence ID" value="NC_004722.1"/>
</dbReference>
<dbReference type="RefSeq" id="WP_000345215.1">
    <property type="nucleotide sequence ID" value="NZ_CP138336.1"/>
</dbReference>
<dbReference type="SMR" id="Q81I72"/>
<dbReference type="STRING" id="226900.BC_0544"/>
<dbReference type="KEGG" id="bce:BC0544"/>
<dbReference type="PATRIC" id="fig|226900.8.peg.500"/>
<dbReference type="HOGENOM" id="CLU_030790_2_0_9"/>
<dbReference type="OrthoDB" id="9784571at2"/>
<dbReference type="UniPathway" id="UPA00392"/>
<dbReference type="Proteomes" id="UP000001417">
    <property type="component" value="Chromosome"/>
</dbReference>
<dbReference type="GO" id="GO:0005737">
    <property type="term" value="C:cytoplasm"/>
    <property type="evidence" value="ECO:0007669"/>
    <property type="project" value="UniProtKB-SubCell"/>
</dbReference>
<dbReference type="GO" id="GO:0051539">
    <property type="term" value="F:4 iron, 4 sulfur cluster binding"/>
    <property type="evidence" value="ECO:0007669"/>
    <property type="project" value="UniProtKB-KW"/>
</dbReference>
<dbReference type="GO" id="GO:0052693">
    <property type="term" value="F:epoxyqueuosine reductase activity"/>
    <property type="evidence" value="ECO:0000318"/>
    <property type="project" value="GO_Central"/>
</dbReference>
<dbReference type="GO" id="GO:0046872">
    <property type="term" value="F:metal ion binding"/>
    <property type="evidence" value="ECO:0007669"/>
    <property type="project" value="UniProtKB-KW"/>
</dbReference>
<dbReference type="GO" id="GO:0008616">
    <property type="term" value="P:queuosine biosynthetic process"/>
    <property type="evidence" value="ECO:0000318"/>
    <property type="project" value="GO_Central"/>
</dbReference>
<dbReference type="GO" id="GO:0006400">
    <property type="term" value="P:tRNA modification"/>
    <property type="evidence" value="ECO:0007669"/>
    <property type="project" value="UniProtKB-UniRule"/>
</dbReference>
<dbReference type="FunFam" id="1.25.10.10:FF:000327">
    <property type="entry name" value="Epoxyqueuosine reductase"/>
    <property type="match status" value="1"/>
</dbReference>
<dbReference type="FunFam" id="3.30.70.20:FF:000037">
    <property type="entry name" value="Epoxyqueuosine reductase"/>
    <property type="match status" value="1"/>
</dbReference>
<dbReference type="Gene3D" id="3.30.70.20">
    <property type="match status" value="1"/>
</dbReference>
<dbReference type="Gene3D" id="1.25.10.10">
    <property type="entry name" value="Leucine-rich Repeat Variant"/>
    <property type="match status" value="1"/>
</dbReference>
<dbReference type="HAMAP" id="MF_00916">
    <property type="entry name" value="QueG"/>
    <property type="match status" value="1"/>
</dbReference>
<dbReference type="InterPro" id="IPR017896">
    <property type="entry name" value="4Fe4S_Fe-S-bd"/>
</dbReference>
<dbReference type="InterPro" id="IPR017900">
    <property type="entry name" value="4Fe4S_Fe_S_CS"/>
</dbReference>
<dbReference type="InterPro" id="IPR011989">
    <property type="entry name" value="ARM-like"/>
</dbReference>
<dbReference type="InterPro" id="IPR016024">
    <property type="entry name" value="ARM-type_fold"/>
</dbReference>
<dbReference type="InterPro" id="IPR004155">
    <property type="entry name" value="PBS_lyase_HEAT"/>
</dbReference>
<dbReference type="InterPro" id="IPR004453">
    <property type="entry name" value="QueG"/>
</dbReference>
<dbReference type="InterPro" id="IPR013542">
    <property type="entry name" value="QueG_DUF1730"/>
</dbReference>
<dbReference type="NCBIfam" id="TIGR00276">
    <property type="entry name" value="tRNA epoxyqueuosine(34) reductase QueG"/>
    <property type="match status" value="1"/>
</dbReference>
<dbReference type="PANTHER" id="PTHR30002">
    <property type="entry name" value="EPOXYQUEUOSINE REDUCTASE"/>
    <property type="match status" value="1"/>
</dbReference>
<dbReference type="PANTHER" id="PTHR30002:SF4">
    <property type="entry name" value="EPOXYQUEUOSINE REDUCTASE"/>
    <property type="match status" value="1"/>
</dbReference>
<dbReference type="Pfam" id="PF13484">
    <property type="entry name" value="Fer4_16"/>
    <property type="match status" value="1"/>
</dbReference>
<dbReference type="Pfam" id="PF13646">
    <property type="entry name" value="HEAT_2"/>
    <property type="match status" value="1"/>
</dbReference>
<dbReference type="Pfam" id="PF08331">
    <property type="entry name" value="QueG_DUF1730"/>
    <property type="match status" value="1"/>
</dbReference>
<dbReference type="SMART" id="SM00567">
    <property type="entry name" value="EZ_HEAT"/>
    <property type="match status" value="2"/>
</dbReference>
<dbReference type="SUPFAM" id="SSF54862">
    <property type="entry name" value="4Fe-4S ferredoxins"/>
    <property type="match status" value="1"/>
</dbReference>
<dbReference type="SUPFAM" id="SSF48371">
    <property type="entry name" value="ARM repeat"/>
    <property type="match status" value="1"/>
</dbReference>
<dbReference type="PROSITE" id="PS00198">
    <property type="entry name" value="4FE4S_FER_1"/>
    <property type="match status" value="1"/>
</dbReference>
<dbReference type="PROSITE" id="PS51379">
    <property type="entry name" value="4FE4S_FER_2"/>
    <property type="match status" value="2"/>
</dbReference>
<evidence type="ECO:0000255" key="1">
    <source>
        <dbReference type="HAMAP-Rule" id="MF_00916"/>
    </source>
</evidence>
<protein>
    <recommendedName>
        <fullName evidence="1">Epoxyqueuosine reductase</fullName>
        <ecNumber evidence="1">1.17.99.6</ecNumber>
    </recommendedName>
    <alternativeName>
        <fullName evidence="1">Queuosine biosynthesis protein QueG</fullName>
    </alternativeName>
</protein>
<proteinExistence type="inferred from homology"/>
<sequence length="380" mass="42398">MDFEQLKQDVIAYSKTIGIDKIGFASASPFEELKQRLIQQQQLNYQSGFEEPDIEKRTNPQLLLPGAKSIIAIALAYPSKLKNAPLSKRGERRGIFCRASWGQDYHLVLRDRLQKLEAYLIEKLPDIEVKSMVDTGELSDRAVSERAGIGWSGKNCSIITPEFGSYVYLGEMITNVPFPPDKPIEDQCGGCTKCIDICPTGALIQGGQLDSKKCIAFLTQTKGFLPEEYRDKIGNRIYGCDTCQTVCPKNKGMDFHNHPEMEPDPELVKPLLTPLLTISNRDFKEKYGIMSGSWRGKKPLQRNAILALAHFKEASAIPDLIGVMKDDPRPVLRGTAAWALGKIGGDGVGEAIEKAMEREKDEEVLHEMNRGLELLAQKKE</sequence>
<comment type="function">
    <text evidence="1">Catalyzes the conversion of epoxyqueuosine (oQ) to queuosine (Q), which is a hypermodified base found in the wobble positions of tRNA(Asp), tRNA(Asn), tRNA(His) and tRNA(Tyr).</text>
</comment>
<comment type="catalytic activity">
    <reaction evidence="1">
        <text>epoxyqueuosine(34) in tRNA + AH2 = queuosine(34) in tRNA + A + H2O</text>
        <dbReference type="Rhea" id="RHEA:32159"/>
        <dbReference type="Rhea" id="RHEA-COMP:18571"/>
        <dbReference type="Rhea" id="RHEA-COMP:18582"/>
        <dbReference type="ChEBI" id="CHEBI:13193"/>
        <dbReference type="ChEBI" id="CHEBI:15377"/>
        <dbReference type="ChEBI" id="CHEBI:17499"/>
        <dbReference type="ChEBI" id="CHEBI:194431"/>
        <dbReference type="ChEBI" id="CHEBI:194443"/>
        <dbReference type="EC" id="1.17.99.6"/>
    </reaction>
</comment>
<comment type="cofactor">
    <cofactor evidence="1">
        <name>cob(II)alamin</name>
        <dbReference type="ChEBI" id="CHEBI:16304"/>
    </cofactor>
</comment>
<comment type="cofactor">
    <cofactor evidence="1">
        <name>[4Fe-4S] cluster</name>
        <dbReference type="ChEBI" id="CHEBI:49883"/>
    </cofactor>
    <text evidence="1">Binds 2 [4Fe-4S] clusters per monomer.</text>
</comment>
<comment type="pathway">
    <text evidence="1">tRNA modification; tRNA-queuosine biosynthesis.</text>
</comment>
<comment type="subunit">
    <text evidence="1">Monomer.</text>
</comment>
<comment type="subcellular location">
    <subcellularLocation>
        <location evidence="1">Cytoplasm</location>
    </subcellularLocation>
</comment>
<comment type="similarity">
    <text evidence="1">Belongs to the QueG family.</text>
</comment>
<keyword id="KW-0004">4Fe-4S</keyword>
<keyword id="KW-0963">Cytoplasm</keyword>
<keyword id="KW-0408">Iron</keyword>
<keyword id="KW-0411">Iron-sulfur</keyword>
<keyword id="KW-0479">Metal-binding</keyword>
<keyword id="KW-0560">Oxidoreductase</keyword>
<keyword id="KW-0671">Queuosine biosynthesis</keyword>
<keyword id="KW-1185">Reference proteome</keyword>
<keyword id="KW-0677">Repeat</keyword>
<keyword id="KW-0819">tRNA processing</keyword>
<name>QUEG_BACCR</name>